<proteinExistence type="inferred from homology"/>
<sequence>MSILQLVLIALMQGITEWLPISSSAHVMLVSDVVGLAGRDELLINAASNAGTLLAMLLYFRKDVAAAIAGGFELLGAPVTRKPLSAGGRLALCILVATPFALAGAVIYENFIPENIWTALRSVYAVAASTIVFGALLWWADARGGQSRSEGDMTLRDAFLIGASQLVAVIIPGTSRSGITMTAARALGYERVEAARFSMLIGAPILAAVSLYGLLGLATTPADGMGASLTDGLIVAALAFVSGYASIGLLMALLRKMSFLPFVLYRFALGIALLATSPIVAGAMG</sequence>
<keyword id="KW-0046">Antibiotic resistance</keyword>
<keyword id="KW-0997">Cell inner membrane</keyword>
<keyword id="KW-1003">Cell membrane</keyword>
<keyword id="KW-0133">Cell shape</keyword>
<keyword id="KW-0961">Cell wall biogenesis/degradation</keyword>
<keyword id="KW-0378">Hydrolase</keyword>
<keyword id="KW-0472">Membrane</keyword>
<keyword id="KW-0573">Peptidoglycan synthesis</keyword>
<keyword id="KW-1185">Reference proteome</keyword>
<keyword id="KW-0812">Transmembrane</keyword>
<keyword id="KW-1133">Transmembrane helix</keyword>
<feature type="chain" id="PRO_0000290715" description="Undecaprenyl-diphosphatase">
    <location>
        <begin position="1"/>
        <end position="285"/>
    </location>
</feature>
<feature type="transmembrane region" description="Helical" evidence="1">
    <location>
        <begin position="40"/>
        <end position="60"/>
    </location>
</feature>
<feature type="transmembrane region" description="Helical" evidence="1">
    <location>
        <begin position="92"/>
        <end position="112"/>
    </location>
</feature>
<feature type="transmembrane region" description="Helical" evidence="1">
    <location>
        <begin position="122"/>
        <end position="142"/>
    </location>
</feature>
<feature type="transmembrane region" description="Helical" evidence="1">
    <location>
        <begin position="159"/>
        <end position="179"/>
    </location>
</feature>
<feature type="transmembrane region" description="Helical" evidence="1">
    <location>
        <begin position="197"/>
        <end position="217"/>
    </location>
</feature>
<feature type="transmembrane region" description="Helical" evidence="1">
    <location>
        <begin position="233"/>
        <end position="253"/>
    </location>
</feature>
<feature type="transmembrane region" description="Helical" evidence="1">
    <location>
        <begin position="259"/>
        <end position="279"/>
    </location>
</feature>
<comment type="function">
    <text evidence="1">Catalyzes the dephosphorylation of undecaprenyl diphosphate (UPP). Confers resistance to bacitracin.</text>
</comment>
<comment type="catalytic activity">
    <reaction evidence="1">
        <text>di-trans,octa-cis-undecaprenyl diphosphate + H2O = di-trans,octa-cis-undecaprenyl phosphate + phosphate + H(+)</text>
        <dbReference type="Rhea" id="RHEA:28094"/>
        <dbReference type="ChEBI" id="CHEBI:15377"/>
        <dbReference type="ChEBI" id="CHEBI:15378"/>
        <dbReference type="ChEBI" id="CHEBI:43474"/>
        <dbReference type="ChEBI" id="CHEBI:58405"/>
        <dbReference type="ChEBI" id="CHEBI:60392"/>
        <dbReference type="EC" id="3.6.1.27"/>
    </reaction>
</comment>
<comment type="subcellular location">
    <subcellularLocation>
        <location evidence="1">Cell inner membrane</location>
        <topology evidence="1">Multi-pass membrane protein</topology>
    </subcellularLocation>
</comment>
<comment type="miscellaneous">
    <text>Bacitracin is thought to be involved in the inhibition of peptidoglycan synthesis by sequestering undecaprenyl diphosphate, thereby reducing the pool of lipid carrier available.</text>
</comment>
<comment type="similarity">
    <text evidence="1">Belongs to the UppP family.</text>
</comment>
<reference key="1">
    <citation type="journal article" date="2006" name="J. Bacteriol.">
        <title>Comparative genomic evidence for a close relationship between the dimorphic prosthecate bacteria Hyphomonas neptunium and Caulobacter crescentus.</title>
        <authorList>
            <person name="Badger J.H."/>
            <person name="Hoover T.R."/>
            <person name="Brun Y.V."/>
            <person name="Weiner R.M."/>
            <person name="Laub M.T."/>
            <person name="Alexandre G."/>
            <person name="Mrazek J."/>
            <person name="Ren Q."/>
            <person name="Paulsen I.T."/>
            <person name="Nelson K.E."/>
            <person name="Khouri H.M."/>
            <person name="Radune D."/>
            <person name="Sosa J."/>
            <person name="Dodson R.J."/>
            <person name="Sullivan S.A."/>
            <person name="Rosovitz M.J."/>
            <person name="Madupu R."/>
            <person name="Brinkac L.M."/>
            <person name="Durkin A.S."/>
            <person name="Daugherty S.C."/>
            <person name="Kothari S.P."/>
            <person name="Giglio M.G."/>
            <person name="Zhou L."/>
            <person name="Haft D.H."/>
            <person name="Selengut J.D."/>
            <person name="Davidsen T.M."/>
            <person name="Yang Q."/>
            <person name="Zafar N."/>
            <person name="Ward N.L."/>
        </authorList>
    </citation>
    <scope>NUCLEOTIDE SEQUENCE [LARGE SCALE GENOMIC DNA]</scope>
    <source>
        <strain>ATCC 15444</strain>
    </source>
</reference>
<accession>Q0C618</accession>
<evidence type="ECO:0000255" key="1">
    <source>
        <dbReference type="HAMAP-Rule" id="MF_01006"/>
    </source>
</evidence>
<protein>
    <recommendedName>
        <fullName evidence="1">Undecaprenyl-diphosphatase</fullName>
        <ecNumber evidence="1">3.6.1.27</ecNumber>
    </recommendedName>
    <alternativeName>
        <fullName evidence="1">Bacitracin resistance protein</fullName>
    </alternativeName>
    <alternativeName>
        <fullName evidence="1">Undecaprenyl pyrophosphate phosphatase</fullName>
    </alternativeName>
</protein>
<organism>
    <name type="scientific">Hyphomonas neptunium (strain ATCC 15444)</name>
    <dbReference type="NCBI Taxonomy" id="228405"/>
    <lineage>
        <taxon>Bacteria</taxon>
        <taxon>Pseudomonadati</taxon>
        <taxon>Pseudomonadota</taxon>
        <taxon>Alphaproteobacteria</taxon>
        <taxon>Hyphomonadales</taxon>
        <taxon>Hyphomonadaceae</taxon>
        <taxon>Hyphomonas</taxon>
    </lineage>
</organism>
<dbReference type="EC" id="3.6.1.27" evidence="1"/>
<dbReference type="EMBL" id="CP000158">
    <property type="protein sequence ID" value="ABI77648.1"/>
    <property type="molecule type" value="Genomic_DNA"/>
</dbReference>
<dbReference type="RefSeq" id="WP_011645125.1">
    <property type="nucleotide sequence ID" value="NC_008358.1"/>
</dbReference>
<dbReference type="SMR" id="Q0C618"/>
<dbReference type="STRING" id="228405.HNE_0091"/>
<dbReference type="KEGG" id="hne:HNE_0091"/>
<dbReference type="eggNOG" id="COG1968">
    <property type="taxonomic scope" value="Bacteria"/>
</dbReference>
<dbReference type="HOGENOM" id="CLU_060296_1_0_5"/>
<dbReference type="Proteomes" id="UP000001959">
    <property type="component" value="Chromosome"/>
</dbReference>
<dbReference type="GO" id="GO:0005886">
    <property type="term" value="C:plasma membrane"/>
    <property type="evidence" value="ECO:0007669"/>
    <property type="project" value="UniProtKB-SubCell"/>
</dbReference>
<dbReference type="GO" id="GO:0050380">
    <property type="term" value="F:undecaprenyl-diphosphatase activity"/>
    <property type="evidence" value="ECO:0007669"/>
    <property type="project" value="UniProtKB-UniRule"/>
</dbReference>
<dbReference type="GO" id="GO:0071555">
    <property type="term" value="P:cell wall organization"/>
    <property type="evidence" value="ECO:0007669"/>
    <property type="project" value="UniProtKB-KW"/>
</dbReference>
<dbReference type="GO" id="GO:0009252">
    <property type="term" value="P:peptidoglycan biosynthetic process"/>
    <property type="evidence" value="ECO:0007669"/>
    <property type="project" value="UniProtKB-KW"/>
</dbReference>
<dbReference type="GO" id="GO:0008360">
    <property type="term" value="P:regulation of cell shape"/>
    <property type="evidence" value="ECO:0007669"/>
    <property type="project" value="UniProtKB-KW"/>
</dbReference>
<dbReference type="GO" id="GO:0046677">
    <property type="term" value="P:response to antibiotic"/>
    <property type="evidence" value="ECO:0007669"/>
    <property type="project" value="UniProtKB-UniRule"/>
</dbReference>
<dbReference type="HAMAP" id="MF_01006">
    <property type="entry name" value="Undec_diphosphatase"/>
    <property type="match status" value="1"/>
</dbReference>
<dbReference type="InterPro" id="IPR003824">
    <property type="entry name" value="UppP"/>
</dbReference>
<dbReference type="PANTHER" id="PTHR30622">
    <property type="entry name" value="UNDECAPRENYL-DIPHOSPHATASE"/>
    <property type="match status" value="1"/>
</dbReference>
<dbReference type="PANTHER" id="PTHR30622:SF4">
    <property type="entry name" value="UNDECAPRENYL-DIPHOSPHATASE"/>
    <property type="match status" value="1"/>
</dbReference>
<dbReference type="Pfam" id="PF02673">
    <property type="entry name" value="BacA"/>
    <property type="match status" value="1"/>
</dbReference>
<name>UPPP_HYPNA</name>
<gene>
    <name evidence="1" type="primary">uppP</name>
    <name type="ordered locus">HNE_0091</name>
</gene>